<gene>
    <name evidence="1" type="primary">pheS</name>
    <name type="ordered locus">SAS1072</name>
</gene>
<accession>Q6GA76</accession>
<evidence type="ECO:0000255" key="1">
    <source>
        <dbReference type="HAMAP-Rule" id="MF_00281"/>
    </source>
</evidence>
<feature type="chain" id="PRO_0000126763" description="Phenylalanine--tRNA ligase alpha subunit">
    <location>
        <begin position="1"/>
        <end position="352"/>
    </location>
</feature>
<feature type="binding site" evidence="1">
    <location>
        <position position="258"/>
    </location>
    <ligand>
        <name>Mg(2+)</name>
        <dbReference type="ChEBI" id="CHEBI:18420"/>
        <note>shared with beta subunit</note>
    </ligand>
</feature>
<dbReference type="EC" id="6.1.1.20" evidence="1"/>
<dbReference type="EMBL" id="BX571857">
    <property type="protein sequence ID" value="CAG42847.1"/>
    <property type="molecule type" value="Genomic_DNA"/>
</dbReference>
<dbReference type="RefSeq" id="WP_000003566.1">
    <property type="nucleotide sequence ID" value="NC_002953.3"/>
</dbReference>
<dbReference type="SMR" id="Q6GA76"/>
<dbReference type="KEGG" id="sas:SAS1072"/>
<dbReference type="HOGENOM" id="CLU_025086_0_1_9"/>
<dbReference type="GO" id="GO:0005737">
    <property type="term" value="C:cytoplasm"/>
    <property type="evidence" value="ECO:0007669"/>
    <property type="project" value="UniProtKB-SubCell"/>
</dbReference>
<dbReference type="GO" id="GO:0005524">
    <property type="term" value="F:ATP binding"/>
    <property type="evidence" value="ECO:0007669"/>
    <property type="project" value="UniProtKB-UniRule"/>
</dbReference>
<dbReference type="GO" id="GO:0140096">
    <property type="term" value="F:catalytic activity, acting on a protein"/>
    <property type="evidence" value="ECO:0007669"/>
    <property type="project" value="UniProtKB-ARBA"/>
</dbReference>
<dbReference type="GO" id="GO:0000287">
    <property type="term" value="F:magnesium ion binding"/>
    <property type="evidence" value="ECO:0007669"/>
    <property type="project" value="UniProtKB-UniRule"/>
</dbReference>
<dbReference type="GO" id="GO:0004826">
    <property type="term" value="F:phenylalanine-tRNA ligase activity"/>
    <property type="evidence" value="ECO:0007669"/>
    <property type="project" value="UniProtKB-UniRule"/>
</dbReference>
<dbReference type="GO" id="GO:0016740">
    <property type="term" value="F:transferase activity"/>
    <property type="evidence" value="ECO:0007669"/>
    <property type="project" value="UniProtKB-ARBA"/>
</dbReference>
<dbReference type="GO" id="GO:0000049">
    <property type="term" value="F:tRNA binding"/>
    <property type="evidence" value="ECO:0007669"/>
    <property type="project" value="InterPro"/>
</dbReference>
<dbReference type="GO" id="GO:0006432">
    <property type="term" value="P:phenylalanyl-tRNA aminoacylation"/>
    <property type="evidence" value="ECO:0007669"/>
    <property type="project" value="UniProtKB-UniRule"/>
</dbReference>
<dbReference type="CDD" id="cd00496">
    <property type="entry name" value="PheRS_alpha_core"/>
    <property type="match status" value="1"/>
</dbReference>
<dbReference type="FunFam" id="3.30.930.10:FF:000003">
    <property type="entry name" value="Phenylalanine--tRNA ligase alpha subunit"/>
    <property type="match status" value="1"/>
</dbReference>
<dbReference type="Gene3D" id="3.30.930.10">
    <property type="entry name" value="Bira Bifunctional Protein, Domain 2"/>
    <property type="match status" value="1"/>
</dbReference>
<dbReference type="HAMAP" id="MF_00281">
    <property type="entry name" value="Phe_tRNA_synth_alpha1"/>
    <property type="match status" value="1"/>
</dbReference>
<dbReference type="InterPro" id="IPR006195">
    <property type="entry name" value="aa-tRNA-synth_II"/>
</dbReference>
<dbReference type="InterPro" id="IPR045864">
    <property type="entry name" value="aa-tRNA-synth_II/BPL/LPL"/>
</dbReference>
<dbReference type="InterPro" id="IPR004529">
    <property type="entry name" value="Phe-tRNA-synth_IIc_asu"/>
</dbReference>
<dbReference type="InterPro" id="IPR004188">
    <property type="entry name" value="Phe-tRNA_ligase_II_N"/>
</dbReference>
<dbReference type="InterPro" id="IPR022911">
    <property type="entry name" value="Phe_tRNA_ligase_alpha1_bac"/>
</dbReference>
<dbReference type="InterPro" id="IPR002319">
    <property type="entry name" value="Phenylalanyl-tRNA_Synthase"/>
</dbReference>
<dbReference type="InterPro" id="IPR010978">
    <property type="entry name" value="tRNA-bd_arm"/>
</dbReference>
<dbReference type="NCBIfam" id="TIGR00468">
    <property type="entry name" value="pheS"/>
    <property type="match status" value="1"/>
</dbReference>
<dbReference type="PANTHER" id="PTHR11538:SF41">
    <property type="entry name" value="PHENYLALANINE--TRNA LIGASE, MITOCHONDRIAL"/>
    <property type="match status" value="1"/>
</dbReference>
<dbReference type="PANTHER" id="PTHR11538">
    <property type="entry name" value="PHENYLALANYL-TRNA SYNTHETASE"/>
    <property type="match status" value="1"/>
</dbReference>
<dbReference type="Pfam" id="PF02912">
    <property type="entry name" value="Phe_tRNA-synt_N"/>
    <property type="match status" value="1"/>
</dbReference>
<dbReference type="Pfam" id="PF01409">
    <property type="entry name" value="tRNA-synt_2d"/>
    <property type="match status" value="1"/>
</dbReference>
<dbReference type="SUPFAM" id="SSF55681">
    <property type="entry name" value="Class II aaRS and biotin synthetases"/>
    <property type="match status" value="1"/>
</dbReference>
<dbReference type="SUPFAM" id="SSF46589">
    <property type="entry name" value="tRNA-binding arm"/>
    <property type="match status" value="1"/>
</dbReference>
<dbReference type="PROSITE" id="PS50862">
    <property type="entry name" value="AA_TRNA_LIGASE_II"/>
    <property type="match status" value="1"/>
</dbReference>
<protein>
    <recommendedName>
        <fullName evidence="1">Phenylalanine--tRNA ligase alpha subunit</fullName>
        <ecNumber evidence="1">6.1.1.20</ecNumber>
    </recommendedName>
    <alternativeName>
        <fullName evidence="1">Phenylalanyl-tRNA synthetase alpha subunit</fullName>
        <shortName evidence="1">PheRS</shortName>
    </alternativeName>
</protein>
<comment type="catalytic activity">
    <reaction evidence="1">
        <text>tRNA(Phe) + L-phenylalanine + ATP = L-phenylalanyl-tRNA(Phe) + AMP + diphosphate + H(+)</text>
        <dbReference type="Rhea" id="RHEA:19413"/>
        <dbReference type="Rhea" id="RHEA-COMP:9668"/>
        <dbReference type="Rhea" id="RHEA-COMP:9699"/>
        <dbReference type="ChEBI" id="CHEBI:15378"/>
        <dbReference type="ChEBI" id="CHEBI:30616"/>
        <dbReference type="ChEBI" id="CHEBI:33019"/>
        <dbReference type="ChEBI" id="CHEBI:58095"/>
        <dbReference type="ChEBI" id="CHEBI:78442"/>
        <dbReference type="ChEBI" id="CHEBI:78531"/>
        <dbReference type="ChEBI" id="CHEBI:456215"/>
        <dbReference type="EC" id="6.1.1.20"/>
    </reaction>
</comment>
<comment type="cofactor">
    <cofactor evidence="1">
        <name>Mg(2+)</name>
        <dbReference type="ChEBI" id="CHEBI:18420"/>
    </cofactor>
    <text evidence="1">Binds 2 magnesium ions per tetramer.</text>
</comment>
<comment type="subunit">
    <text evidence="1">Tetramer of two alpha and two beta subunits.</text>
</comment>
<comment type="subcellular location">
    <subcellularLocation>
        <location evidence="1">Cytoplasm</location>
    </subcellularLocation>
</comment>
<comment type="similarity">
    <text evidence="1">Belongs to the class-II aminoacyl-tRNA synthetase family. Phe-tRNA synthetase alpha subunit type 1 subfamily.</text>
</comment>
<sequence>MSEQQTMSELKQQALVDINEANDERALQEVKVKYLGKKGSVSGLMKLMKDLPNEEKPAFGQKVNELRQTIQNELDERQQMLVKEKLNKQLAEETIDVSLPGRHIEIGSKHPLTRTIEEIEDLFLGLGYEIVNGYEVEQDHYNFEMLNLPKSHPARDMQDSFYITDEILLRTHTSPVQARTMESRHGQGPVKIICPGKVYRRDSDDATHSHQFTQIEGLVVDKNVKMSDLKGTLELLAKKLFGADREIRLRPSYFPFTEPSVEVDVSCFKCKGKGCNVCKHTGWIEILGAGMVHPNVLEMAGFDSSEYSGFAFGMGPDRIAMLKYGIEDIRHFYTNDVRFLDQFKAVEDRGDM</sequence>
<reference key="1">
    <citation type="journal article" date="2004" name="Proc. Natl. Acad. Sci. U.S.A.">
        <title>Complete genomes of two clinical Staphylococcus aureus strains: evidence for the rapid evolution of virulence and drug resistance.</title>
        <authorList>
            <person name="Holden M.T.G."/>
            <person name="Feil E.J."/>
            <person name="Lindsay J.A."/>
            <person name="Peacock S.J."/>
            <person name="Day N.P.J."/>
            <person name="Enright M.C."/>
            <person name="Foster T.J."/>
            <person name="Moore C.E."/>
            <person name="Hurst L."/>
            <person name="Atkin R."/>
            <person name="Barron A."/>
            <person name="Bason N."/>
            <person name="Bentley S.D."/>
            <person name="Chillingworth C."/>
            <person name="Chillingworth T."/>
            <person name="Churcher C."/>
            <person name="Clark L."/>
            <person name="Corton C."/>
            <person name="Cronin A."/>
            <person name="Doggett J."/>
            <person name="Dowd L."/>
            <person name="Feltwell T."/>
            <person name="Hance Z."/>
            <person name="Harris B."/>
            <person name="Hauser H."/>
            <person name="Holroyd S."/>
            <person name="Jagels K."/>
            <person name="James K.D."/>
            <person name="Lennard N."/>
            <person name="Line A."/>
            <person name="Mayes R."/>
            <person name="Moule S."/>
            <person name="Mungall K."/>
            <person name="Ormond D."/>
            <person name="Quail M.A."/>
            <person name="Rabbinowitsch E."/>
            <person name="Rutherford K.M."/>
            <person name="Sanders M."/>
            <person name="Sharp S."/>
            <person name="Simmonds M."/>
            <person name="Stevens K."/>
            <person name="Whitehead S."/>
            <person name="Barrell B.G."/>
            <person name="Spratt B.G."/>
            <person name="Parkhill J."/>
        </authorList>
    </citation>
    <scope>NUCLEOTIDE SEQUENCE [LARGE SCALE GENOMIC DNA]</scope>
    <source>
        <strain>MSSA476</strain>
    </source>
</reference>
<name>SYFA_STAAS</name>
<proteinExistence type="inferred from homology"/>
<organism>
    <name type="scientific">Staphylococcus aureus (strain MSSA476)</name>
    <dbReference type="NCBI Taxonomy" id="282459"/>
    <lineage>
        <taxon>Bacteria</taxon>
        <taxon>Bacillati</taxon>
        <taxon>Bacillota</taxon>
        <taxon>Bacilli</taxon>
        <taxon>Bacillales</taxon>
        <taxon>Staphylococcaceae</taxon>
        <taxon>Staphylococcus</taxon>
    </lineage>
</organism>
<keyword id="KW-0030">Aminoacyl-tRNA synthetase</keyword>
<keyword id="KW-0067">ATP-binding</keyword>
<keyword id="KW-0963">Cytoplasm</keyword>
<keyword id="KW-0436">Ligase</keyword>
<keyword id="KW-0460">Magnesium</keyword>
<keyword id="KW-0479">Metal-binding</keyword>
<keyword id="KW-0547">Nucleotide-binding</keyword>
<keyword id="KW-0648">Protein biosynthesis</keyword>